<dbReference type="EMBL" id="CP000821">
    <property type="protein sequence ID" value="ABV38900.1"/>
    <property type="molecule type" value="Genomic_DNA"/>
</dbReference>
<dbReference type="RefSeq" id="WP_012144629.1">
    <property type="nucleotide sequence ID" value="NC_009831.1"/>
</dbReference>
<dbReference type="SMR" id="A8G1C7"/>
<dbReference type="STRING" id="425104.Ssed_4296"/>
<dbReference type="KEGG" id="sse:Ssed_4296"/>
<dbReference type="eggNOG" id="COG0100">
    <property type="taxonomic scope" value="Bacteria"/>
</dbReference>
<dbReference type="HOGENOM" id="CLU_072439_5_0_6"/>
<dbReference type="OrthoDB" id="9806415at2"/>
<dbReference type="Proteomes" id="UP000002015">
    <property type="component" value="Chromosome"/>
</dbReference>
<dbReference type="GO" id="GO:1990904">
    <property type="term" value="C:ribonucleoprotein complex"/>
    <property type="evidence" value="ECO:0007669"/>
    <property type="project" value="UniProtKB-KW"/>
</dbReference>
<dbReference type="GO" id="GO:0005840">
    <property type="term" value="C:ribosome"/>
    <property type="evidence" value="ECO:0007669"/>
    <property type="project" value="UniProtKB-KW"/>
</dbReference>
<dbReference type="GO" id="GO:0019843">
    <property type="term" value="F:rRNA binding"/>
    <property type="evidence" value="ECO:0007669"/>
    <property type="project" value="UniProtKB-UniRule"/>
</dbReference>
<dbReference type="GO" id="GO:0003735">
    <property type="term" value="F:structural constituent of ribosome"/>
    <property type="evidence" value="ECO:0007669"/>
    <property type="project" value="InterPro"/>
</dbReference>
<dbReference type="GO" id="GO:0006412">
    <property type="term" value="P:translation"/>
    <property type="evidence" value="ECO:0007669"/>
    <property type="project" value="UniProtKB-UniRule"/>
</dbReference>
<dbReference type="FunFam" id="3.30.420.80:FF:000001">
    <property type="entry name" value="30S ribosomal protein S11"/>
    <property type="match status" value="1"/>
</dbReference>
<dbReference type="Gene3D" id="3.30.420.80">
    <property type="entry name" value="Ribosomal protein S11"/>
    <property type="match status" value="1"/>
</dbReference>
<dbReference type="HAMAP" id="MF_01310">
    <property type="entry name" value="Ribosomal_uS11"/>
    <property type="match status" value="1"/>
</dbReference>
<dbReference type="InterPro" id="IPR001971">
    <property type="entry name" value="Ribosomal_uS11"/>
</dbReference>
<dbReference type="InterPro" id="IPR019981">
    <property type="entry name" value="Ribosomal_uS11_bac-type"/>
</dbReference>
<dbReference type="InterPro" id="IPR018102">
    <property type="entry name" value="Ribosomal_uS11_CS"/>
</dbReference>
<dbReference type="InterPro" id="IPR036967">
    <property type="entry name" value="Ribosomal_uS11_sf"/>
</dbReference>
<dbReference type="NCBIfam" id="NF003698">
    <property type="entry name" value="PRK05309.1"/>
    <property type="match status" value="1"/>
</dbReference>
<dbReference type="NCBIfam" id="TIGR03632">
    <property type="entry name" value="uS11_bact"/>
    <property type="match status" value="1"/>
</dbReference>
<dbReference type="PANTHER" id="PTHR11759">
    <property type="entry name" value="40S RIBOSOMAL PROTEIN S14/30S RIBOSOMAL PROTEIN S11"/>
    <property type="match status" value="1"/>
</dbReference>
<dbReference type="Pfam" id="PF00411">
    <property type="entry name" value="Ribosomal_S11"/>
    <property type="match status" value="1"/>
</dbReference>
<dbReference type="PIRSF" id="PIRSF002131">
    <property type="entry name" value="Ribosomal_S11"/>
    <property type="match status" value="1"/>
</dbReference>
<dbReference type="SUPFAM" id="SSF53137">
    <property type="entry name" value="Translational machinery components"/>
    <property type="match status" value="1"/>
</dbReference>
<dbReference type="PROSITE" id="PS00054">
    <property type="entry name" value="RIBOSOMAL_S11"/>
    <property type="match status" value="1"/>
</dbReference>
<proteinExistence type="inferred from homology"/>
<accession>A8G1C7</accession>
<evidence type="ECO:0000255" key="1">
    <source>
        <dbReference type="HAMAP-Rule" id="MF_01310"/>
    </source>
</evidence>
<evidence type="ECO:0000305" key="2"/>
<reference key="1">
    <citation type="submission" date="2007-08" db="EMBL/GenBank/DDBJ databases">
        <title>Complete sequence of Shewanella sediminis HAW-EB3.</title>
        <authorList>
            <consortium name="US DOE Joint Genome Institute"/>
            <person name="Copeland A."/>
            <person name="Lucas S."/>
            <person name="Lapidus A."/>
            <person name="Barry K."/>
            <person name="Glavina del Rio T."/>
            <person name="Dalin E."/>
            <person name="Tice H."/>
            <person name="Pitluck S."/>
            <person name="Chertkov O."/>
            <person name="Brettin T."/>
            <person name="Bruce D."/>
            <person name="Detter J.C."/>
            <person name="Han C."/>
            <person name="Schmutz J."/>
            <person name="Larimer F."/>
            <person name="Land M."/>
            <person name="Hauser L."/>
            <person name="Kyrpides N."/>
            <person name="Kim E."/>
            <person name="Zhao J.-S."/>
            <person name="Richardson P."/>
        </authorList>
    </citation>
    <scope>NUCLEOTIDE SEQUENCE [LARGE SCALE GENOMIC DNA]</scope>
    <source>
        <strain>HAW-EB3</strain>
    </source>
</reference>
<organism>
    <name type="scientific">Shewanella sediminis (strain HAW-EB3)</name>
    <dbReference type="NCBI Taxonomy" id="425104"/>
    <lineage>
        <taxon>Bacteria</taxon>
        <taxon>Pseudomonadati</taxon>
        <taxon>Pseudomonadota</taxon>
        <taxon>Gammaproteobacteria</taxon>
        <taxon>Alteromonadales</taxon>
        <taxon>Shewanellaceae</taxon>
        <taxon>Shewanella</taxon>
    </lineage>
</organism>
<comment type="function">
    <text evidence="1">Located on the platform of the 30S subunit, it bridges several disparate RNA helices of the 16S rRNA. Forms part of the Shine-Dalgarno cleft in the 70S ribosome.</text>
</comment>
<comment type="subunit">
    <text evidence="1">Part of the 30S ribosomal subunit. Interacts with proteins S7 and S18. Binds to IF-3.</text>
</comment>
<comment type="similarity">
    <text evidence="1">Belongs to the universal ribosomal protein uS11 family.</text>
</comment>
<gene>
    <name evidence="1" type="primary">rpsK</name>
    <name type="ordered locus">Ssed_4296</name>
</gene>
<keyword id="KW-1185">Reference proteome</keyword>
<keyword id="KW-0687">Ribonucleoprotein</keyword>
<keyword id="KW-0689">Ribosomal protein</keyword>
<keyword id="KW-0694">RNA-binding</keyword>
<keyword id="KW-0699">rRNA-binding</keyword>
<sequence length="130" mass="13936">MAKVPSRSPRKRVRKQVADGMAHIHASFNNTIITITDRQGNALSWATSGGSGFRGSRKSTPFAAQVAAERAGVAAQDYGVKNLEVFVKGPGPGRESAIRALNSVGYKITNITDVTPIPHNGCRPPKKRRV</sequence>
<feature type="chain" id="PRO_1000086213" description="Small ribosomal subunit protein uS11">
    <location>
        <begin position="1"/>
        <end position="130"/>
    </location>
</feature>
<name>RS11_SHESH</name>
<protein>
    <recommendedName>
        <fullName evidence="1">Small ribosomal subunit protein uS11</fullName>
    </recommendedName>
    <alternativeName>
        <fullName evidence="2">30S ribosomal protein S11</fullName>
    </alternativeName>
</protein>